<organism>
    <name type="scientific">Homo sapiens</name>
    <name type="common">Human</name>
    <dbReference type="NCBI Taxonomy" id="9606"/>
    <lineage>
        <taxon>Eukaryota</taxon>
        <taxon>Metazoa</taxon>
        <taxon>Chordata</taxon>
        <taxon>Craniata</taxon>
        <taxon>Vertebrata</taxon>
        <taxon>Euteleostomi</taxon>
        <taxon>Mammalia</taxon>
        <taxon>Eutheria</taxon>
        <taxon>Euarchontoglires</taxon>
        <taxon>Primates</taxon>
        <taxon>Haplorrhini</taxon>
        <taxon>Catarrhini</taxon>
        <taxon>Hominidae</taxon>
        <taxon>Homo</taxon>
    </lineage>
</organism>
<sequence length="815" mass="93645">MEPSTCRTMESEEDYVEEKESEKCVKEGVTNPSNSSQQALLKADYKALKNGVPSPIMATKIPKKVIAPVDTGDLEAGRRKRRRKRRSLAINLTNCKYESVRRAAQMCGLKEVGEDEEWTLYWTDCAVSLERVMDMKRFQKINHFPGMTEICRKDLLARNLNRMYKLYPSEYNIFPRTWCLPADYGDFQSYGRQRKARTYICKPDSGCQGRGIFITRNPREIKPGEHMICQQYISKPLLIDGFKFDMRVYVLITSCDPLRIFTYEEGLARFATTPYMEPSHNNLDNVCMHLTNYAINKHNENFVRDGAVGSKRKLSTLNIWLQEHSYNPGELWGDIEDIIIKTIISAHSVLRHNYRTCFPQYLNGGTCACFEILGFDILLDHKLKPWLLEVNHSPSFTTDSCLDQEVKDALLCDAMTLVNLRGCDKRKVMEEDKRRVKERLFQCYRQPRESRKEKTESSHVAMLDQERYEDSHLGKYRRIYPGPDTEKYARFFKHNGSLFQETAASKAREECARQQLEEIRLKQEQQETSGTKRQKARDQNQGESAGEKSRPRAGLQSLSTHLAYRNRNWEKELLPGQLDTMRPQEIVEEEELERMKALLQRETLIRSLGIVEQLTRLQHPGPQGQKKLHESRDRLGSQELKSMSLVLLVLLRGAATEQGAPHFLHPVLPHESIPRILGALPSMNAAIPHVPRYHLQPKNFNWTGEPAAINSCSLSMKKAGRCYFSSARIRLTSQGQASRRLEAINRVLAGSVPPTLTPKQGYFLQPERVASDSWTECTLPSMVNSEHRAAKVPLCPASAPMLQRSRALLNINQFR</sequence>
<evidence type="ECO:0000250" key="1">
    <source>
        <dbReference type="UniProtKB" id="A4Q9E8"/>
    </source>
</evidence>
<evidence type="ECO:0000250" key="2">
    <source>
        <dbReference type="UniProtKB" id="A4Q9F6"/>
    </source>
</evidence>
<evidence type="ECO:0000250" key="3">
    <source>
        <dbReference type="UniProtKB" id="Q6ZT98"/>
    </source>
</evidence>
<evidence type="ECO:0000255" key="4"/>
<evidence type="ECO:0000255" key="5">
    <source>
        <dbReference type="PROSITE-ProRule" id="PRU00568"/>
    </source>
</evidence>
<evidence type="ECO:0000256" key="6">
    <source>
        <dbReference type="SAM" id="MobiDB-lite"/>
    </source>
</evidence>
<evidence type="ECO:0000269" key="7">
    <source>
    </source>
</evidence>
<evidence type="ECO:0000303" key="8">
    <source>
    </source>
</evidence>
<evidence type="ECO:0000303" key="9">
    <source>
    </source>
</evidence>
<evidence type="ECO:0000305" key="10"/>
<evidence type="ECO:0000312" key="11">
    <source>
        <dbReference type="HGNC" id="HGNC:32484"/>
    </source>
</evidence>
<gene>
    <name evidence="11" type="primary">TTLL13</name>
    <name type="synonym">TTLL13P</name>
</gene>
<reference key="1">
    <citation type="journal article" date="2004" name="Nat. Genet.">
        <title>Complete sequencing and characterization of 21,243 full-length human cDNAs.</title>
        <authorList>
            <person name="Ota T."/>
            <person name="Suzuki Y."/>
            <person name="Nishikawa T."/>
            <person name="Otsuki T."/>
            <person name="Sugiyama T."/>
            <person name="Irie R."/>
            <person name="Wakamatsu A."/>
            <person name="Hayashi K."/>
            <person name="Sato H."/>
            <person name="Nagai K."/>
            <person name="Kimura K."/>
            <person name="Makita H."/>
            <person name="Sekine M."/>
            <person name="Obayashi M."/>
            <person name="Nishi T."/>
            <person name="Shibahara T."/>
            <person name="Tanaka T."/>
            <person name="Ishii S."/>
            <person name="Yamamoto J."/>
            <person name="Saito K."/>
            <person name="Kawai Y."/>
            <person name="Isono Y."/>
            <person name="Nakamura Y."/>
            <person name="Nagahari K."/>
            <person name="Murakami K."/>
            <person name="Yasuda T."/>
            <person name="Iwayanagi T."/>
            <person name="Wagatsuma M."/>
            <person name="Shiratori A."/>
            <person name="Sudo H."/>
            <person name="Hosoiri T."/>
            <person name="Kaku Y."/>
            <person name="Kodaira H."/>
            <person name="Kondo H."/>
            <person name="Sugawara M."/>
            <person name="Takahashi M."/>
            <person name="Kanda K."/>
            <person name="Yokoi T."/>
            <person name="Furuya T."/>
            <person name="Kikkawa E."/>
            <person name="Omura Y."/>
            <person name="Abe K."/>
            <person name="Kamihara K."/>
            <person name="Katsuta N."/>
            <person name="Sato K."/>
            <person name="Tanikawa M."/>
            <person name="Yamazaki M."/>
            <person name="Ninomiya K."/>
            <person name="Ishibashi T."/>
            <person name="Yamashita H."/>
            <person name="Murakawa K."/>
            <person name="Fujimori K."/>
            <person name="Tanai H."/>
            <person name="Kimata M."/>
            <person name="Watanabe M."/>
            <person name="Hiraoka S."/>
            <person name="Chiba Y."/>
            <person name="Ishida S."/>
            <person name="Ono Y."/>
            <person name="Takiguchi S."/>
            <person name="Watanabe S."/>
            <person name="Yosida M."/>
            <person name="Hotuta T."/>
            <person name="Kusano J."/>
            <person name="Kanehori K."/>
            <person name="Takahashi-Fujii A."/>
            <person name="Hara H."/>
            <person name="Tanase T.-O."/>
            <person name="Nomura Y."/>
            <person name="Togiya S."/>
            <person name="Komai F."/>
            <person name="Hara R."/>
            <person name="Takeuchi K."/>
            <person name="Arita M."/>
            <person name="Imose N."/>
            <person name="Musashino K."/>
            <person name="Yuuki H."/>
            <person name="Oshima A."/>
            <person name="Sasaki N."/>
            <person name="Aotsuka S."/>
            <person name="Yoshikawa Y."/>
            <person name="Matsunawa H."/>
            <person name="Ichihara T."/>
            <person name="Shiohata N."/>
            <person name="Sano S."/>
            <person name="Moriya S."/>
            <person name="Momiyama H."/>
            <person name="Satoh N."/>
            <person name="Takami S."/>
            <person name="Terashima Y."/>
            <person name="Suzuki O."/>
            <person name="Nakagawa S."/>
            <person name="Senoh A."/>
            <person name="Mizoguchi H."/>
            <person name="Goto Y."/>
            <person name="Shimizu F."/>
            <person name="Wakebe H."/>
            <person name="Hishigaki H."/>
            <person name="Watanabe T."/>
            <person name="Sugiyama A."/>
            <person name="Takemoto M."/>
            <person name="Kawakami B."/>
            <person name="Yamazaki M."/>
            <person name="Watanabe K."/>
            <person name="Kumagai A."/>
            <person name="Itakura S."/>
            <person name="Fukuzumi Y."/>
            <person name="Fujimori Y."/>
            <person name="Komiyama M."/>
            <person name="Tashiro H."/>
            <person name="Tanigami A."/>
            <person name="Fujiwara T."/>
            <person name="Ono T."/>
            <person name="Yamada K."/>
            <person name="Fujii Y."/>
            <person name="Ozaki K."/>
            <person name="Hirao M."/>
            <person name="Ohmori Y."/>
            <person name="Kawabata A."/>
            <person name="Hikiji T."/>
            <person name="Kobatake N."/>
            <person name="Inagaki H."/>
            <person name="Ikema Y."/>
            <person name="Okamoto S."/>
            <person name="Okitani R."/>
            <person name="Kawakami T."/>
            <person name="Noguchi S."/>
            <person name="Itoh T."/>
            <person name="Shigeta K."/>
            <person name="Senba T."/>
            <person name="Matsumura K."/>
            <person name="Nakajima Y."/>
            <person name="Mizuno T."/>
            <person name="Morinaga M."/>
            <person name="Sasaki M."/>
            <person name="Togashi T."/>
            <person name="Oyama M."/>
            <person name="Hata H."/>
            <person name="Watanabe M."/>
            <person name="Komatsu T."/>
            <person name="Mizushima-Sugano J."/>
            <person name="Satoh T."/>
            <person name="Shirai Y."/>
            <person name="Takahashi Y."/>
            <person name="Nakagawa K."/>
            <person name="Okumura K."/>
            <person name="Nagase T."/>
            <person name="Nomura N."/>
            <person name="Kikuchi H."/>
            <person name="Masuho Y."/>
            <person name="Yamashita R."/>
            <person name="Nakai K."/>
            <person name="Yada T."/>
            <person name="Nakamura Y."/>
            <person name="Ohara O."/>
            <person name="Isogai T."/>
            <person name="Sugano S."/>
        </authorList>
    </citation>
    <scope>NUCLEOTIDE SEQUENCE [LARGE SCALE MRNA] (ISOFORM 2)</scope>
    <source>
        <tissue>Testis</tissue>
    </source>
</reference>
<reference key="2">
    <citation type="journal article" date="2006" name="Nature">
        <title>Analysis of the DNA sequence and duplication history of human chromosome 15.</title>
        <authorList>
            <person name="Zody M.C."/>
            <person name="Garber M."/>
            <person name="Sharpe T."/>
            <person name="Young S.K."/>
            <person name="Rowen L."/>
            <person name="O'Neill K."/>
            <person name="Whittaker C.A."/>
            <person name="Kamal M."/>
            <person name="Chang J.L."/>
            <person name="Cuomo C.A."/>
            <person name="Dewar K."/>
            <person name="FitzGerald M.G."/>
            <person name="Kodira C.D."/>
            <person name="Madan A."/>
            <person name="Qin S."/>
            <person name="Yang X."/>
            <person name="Abbasi N."/>
            <person name="Abouelleil A."/>
            <person name="Arachchi H.M."/>
            <person name="Baradarani L."/>
            <person name="Birditt B."/>
            <person name="Bloom S."/>
            <person name="Bloom T."/>
            <person name="Borowsky M.L."/>
            <person name="Burke J."/>
            <person name="Butler J."/>
            <person name="Cook A."/>
            <person name="DeArellano K."/>
            <person name="DeCaprio D."/>
            <person name="Dorris L. III"/>
            <person name="Dors M."/>
            <person name="Eichler E.E."/>
            <person name="Engels R."/>
            <person name="Fahey J."/>
            <person name="Fleetwood P."/>
            <person name="Friedman C."/>
            <person name="Gearin G."/>
            <person name="Hall J.L."/>
            <person name="Hensley G."/>
            <person name="Johnson E."/>
            <person name="Jones C."/>
            <person name="Kamat A."/>
            <person name="Kaur A."/>
            <person name="Locke D.P."/>
            <person name="Madan A."/>
            <person name="Munson G."/>
            <person name="Jaffe D.B."/>
            <person name="Lui A."/>
            <person name="Macdonald P."/>
            <person name="Mauceli E."/>
            <person name="Naylor J.W."/>
            <person name="Nesbitt R."/>
            <person name="Nicol R."/>
            <person name="O'Leary S.B."/>
            <person name="Ratcliffe A."/>
            <person name="Rounsley S."/>
            <person name="She X."/>
            <person name="Sneddon K.M.B."/>
            <person name="Stewart S."/>
            <person name="Sougnez C."/>
            <person name="Stone S.M."/>
            <person name="Topham K."/>
            <person name="Vincent D."/>
            <person name="Wang S."/>
            <person name="Zimmer A.R."/>
            <person name="Birren B.W."/>
            <person name="Hood L."/>
            <person name="Lander E.S."/>
            <person name="Nusbaum C."/>
        </authorList>
    </citation>
    <scope>NUCLEOTIDE SEQUENCE [LARGE SCALE GENOMIC DNA]</scope>
</reference>
<reference key="3">
    <citation type="submission" date="2005-07" db="EMBL/GenBank/DDBJ databases">
        <authorList>
            <person name="Mural R.J."/>
            <person name="Istrail S."/>
            <person name="Sutton G.G."/>
            <person name="Florea L."/>
            <person name="Halpern A.L."/>
            <person name="Mobarry C.M."/>
            <person name="Lippert R."/>
            <person name="Walenz B."/>
            <person name="Shatkay H."/>
            <person name="Dew I."/>
            <person name="Miller J.R."/>
            <person name="Flanigan M.J."/>
            <person name="Edwards N.J."/>
            <person name="Bolanos R."/>
            <person name="Fasulo D."/>
            <person name="Halldorsson B.V."/>
            <person name="Hannenhalli S."/>
            <person name="Turner R."/>
            <person name="Yooseph S."/>
            <person name="Lu F."/>
            <person name="Nusskern D.R."/>
            <person name="Shue B.C."/>
            <person name="Zheng X.H."/>
            <person name="Zhong F."/>
            <person name="Delcher A.L."/>
            <person name="Huson D.H."/>
            <person name="Kravitz S.A."/>
            <person name="Mouchard L."/>
            <person name="Reinert K."/>
            <person name="Remington K.A."/>
            <person name="Clark A.G."/>
            <person name="Waterman M.S."/>
            <person name="Eichler E.E."/>
            <person name="Adams M.D."/>
            <person name="Hunkapiller M.W."/>
            <person name="Myers E.W."/>
            <person name="Venter J.C."/>
        </authorList>
    </citation>
    <scope>NUCLEOTIDE SEQUENCE [LARGE SCALE GENOMIC DNA]</scope>
</reference>
<reference key="4">
    <citation type="journal article" date="2004" name="Genome Res.">
        <title>The status, quality, and expansion of the NIH full-length cDNA project: the Mammalian Gene Collection (MGC).</title>
        <authorList>
            <consortium name="The MGC Project Team"/>
        </authorList>
    </citation>
    <scope>NUCLEOTIDE SEQUENCE [LARGE SCALE MRNA] (ISOFORM 2)</scope>
    <source>
        <tissue>Testis</tissue>
    </source>
</reference>
<reference key="5">
    <citation type="journal article" date="2015" name="Cell">
        <title>Multivalent microtubule recognition by tubulin tyrosine ligase-like family glutamylases.</title>
        <authorList>
            <person name="Garnham C.P."/>
            <person name="Vemu A."/>
            <person name="Wilson-Kubalek E.M."/>
            <person name="Yu I."/>
            <person name="Szyk A."/>
            <person name="Lander G.C."/>
            <person name="Milligan R.A."/>
            <person name="Roll-Mecak A."/>
        </authorList>
    </citation>
    <scope>DOMAIN</scope>
    <scope>MUTAGENESIS OF 425-LYS--LYS-427 AND 451-ARG-LYS-452</scope>
</reference>
<keyword id="KW-0025">Alternative splicing</keyword>
<keyword id="KW-0067">ATP-binding</keyword>
<keyword id="KW-0175">Coiled coil</keyword>
<keyword id="KW-0436">Ligase</keyword>
<keyword id="KW-0460">Magnesium</keyword>
<keyword id="KW-0479">Metal-binding</keyword>
<keyword id="KW-0493">Microtubule</keyword>
<keyword id="KW-0547">Nucleotide-binding</keyword>
<keyword id="KW-1185">Reference proteome</keyword>
<accession>A6NNM8</accession>
<protein>
    <recommendedName>
        <fullName>Tubulin polyglutamylase TTLL13</fullName>
        <ecNumber evidence="2">6.3.2.-</ecNumber>
    </recommendedName>
    <alternativeName>
        <fullName evidence="11">Tubulin tyrosine ligase like 13</fullName>
    </alternativeName>
    <alternativeName>
        <fullName>Tubulin tyrosine ligase-like family member 13 pseudogene</fullName>
    </alternativeName>
    <alternativeName>
        <fullName>Tubulin--tyrosine ligase-like protein 13</fullName>
    </alternativeName>
</protein>
<dbReference type="EC" id="6.3.2.-" evidence="2"/>
<dbReference type="EMBL" id="AK127965">
    <property type="status" value="NOT_ANNOTATED_CDS"/>
    <property type="molecule type" value="mRNA"/>
</dbReference>
<dbReference type="EMBL" id="AC091167">
    <property type="status" value="NOT_ANNOTATED_CDS"/>
    <property type="molecule type" value="Genomic_DNA"/>
</dbReference>
<dbReference type="EMBL" id="CH471101">
    <property type="protein sequence ID" value="EAX02094.1"/>
    <property type="molecule type" value="Genomic_DNA"/>
</dbReference>
<dbReference type="EMBL" id="BC036668">
    <property type="status" value="NOT_ANNOTATED_CDS"/>
    <property type="molecule type" value="Genomic_DNA"/>
</dbReference>
<dbReference type="SMR" id="A6NNM8"/>
<dbReference type="FunCoup" id="A6NNM8">
    <property type="interactions" value="105"/>
</dbReference>
<dbReference type="IntAct" id="A6NNM8">
    <property type="interactions" value="2"/>
</dbReference>
<dbReference type="STRING" id="9606.ENSP00000491066"/>
<dbReference type="iPTMnet" id="A6NNM8"/>
<dbReference type="PhosphoSitePlus" id="A6NNM8"/>
<dbReference type="BioMuta" id="TTLL13P"/>
<dbReference type="jPOST" id="A6NNM8"/>
<dbReference type="MassIVE" id="A6NNM8"/>
<dbReference type="PeptideAtlas" id="A6NNM8"/>
<dbReference type="ProteomicsDB" id="1621">
    <molecule id="A6NNM8-1"/>
</dbReference>
<dbReference type="Antibodypedia" id="64383">
    <property type="antibodies" value="23 antibodies from 8 providers"/>
</dbReference>
<dbReference type="DNASU" id="440307"/>
<dbReference type="Ensembl" id="ENST00000438251.3">
    <molecule id="A6NNM8-1"/>
    <property type="protein sequence ID" value="ENSP00000491066.1"/>
    <property type="gene ID" value="ENSG00000213471.10"/>
</dbReference>
<dbReference type="AGR" id="HGNC:32484"/>
<dbReference type="GeneCards" id="TTLL13"/>
<dbReference type="HGNC" id="HGNC:32484">
    <property type="gene designation" value="TTLL13"/>
</dbReference>
<dbReference type="HPA" id="ENSG00000213471">
    <property type="expression patterns" value="Tissue enriched (testis)"/>
</dbReference>
<dbReference type="MIM" id="620485">
    <property type="type" value="gene"/>
</dbReference>
<dbReference type="neXtProt" id="NX_A6NNM8"/>
<dbReference type="OpenTargets" id="ENSG00000213471"/>
<dbReference type="PharmGKB" id="PA143485664"/>
<dbReference type="VEuPathDB" id="HostDB:ENSG00000213471"/>
<dbReference type="GeneTree" id="ENSGT00940000161367"/>
<dbReference type="InParanoid" id="A6NNM8"/>
<dbReference type="OMA" id="SICILNC"/>
<dbReference type="OrthoDB" id="202825at2759"/>
<dbReference type="PAN-GO" id="A6NNM8">
    <property type="GO annotations" value="5 GO annotations based on evolutionary models"/>
</dbReference>
<dbReference type="PhylomeDB" id="A6NNM8"/>
<dbReference type="TreeFam" id="TF313087"/>
<dbReference type="PathwayCommons" id="A6NNM8"/>
<dbReference type="Reactome" id="R-HSA-8955332">
    <property type="pathway name" value="Carboxyterminal post-translational modifications of tubulin"/>
</dbReference>
<dbReference type="SignaLink" id="A6NNM8"/>
<dbReference type="Pharos" id="A6NNM8">
    <property type="development level" value="Tdark"/>
</dbReference>
<dbReference type="PRO" id="PR:A6NNM8"/>
<dbReference type="Proteomes" id="UP000005640">
    <property type="component" value="Chromosome 15"/>
</dbReference>
<dbReference type="RNAct" id="A6NNM8">
    <property type="molecule type" value="protein"/>
</dbReference>
<dbReference type="Bgee" id="ENSG00000213471">
    <property type="expression patterns" value="Expressed in male germ line stem cell (sensu Vertebrata) in testis and 94 other cell types or tissues"/>
</dbReference>
<dbReference type="ExpressionAtlas" id="A6NNM8">
    <property type="expression patterns" value="baseline and differential"/>
</dbReference>
<dbReference type="GO" id="GO:0036064">
    <property type="term" value="C:ciliary basal body"/>
    <property type="evidence" value="ECO:0000318"/>
    <property type="project" value="GO_Central"/>
</dbReference>
<dbReference type="GO" id="GO:0005829">
    <property type="term" value="C:cytosol"/>
    <property type="evidence" value="ECO:0000304"/>
    <property type="project" value="Reactome"/>
</dbReference>
<dbReference type="GO" id="GO:0005874">
    <property type="term" value="C:microtubule"/>
    <property type="evidence" value="ECO:0007669"/>
    <property type="project" value="UniProtKB-KW"/>
</dbReference>
<dbReference type="GO" id="GO:0005524">
    <property type="term" value="F:ATP binding"/>
    <property type="evidence" value="ECO:0007669"/>
    <property type="project" value="UniProtKB-KW"/>
</dbReference>
<dbReference type="GO" id="GO:0046872">
    <property type="term" value="F:metal ion binding"/>
    <property type="evidence" value="ECO:0007669"/>
    <property type="project" value="UniProtKB-KW"/>
</dbReference>
<dbReference type="GO" id="GO:0106438">
    <property type="term" value="F:protein-glutamic acid ligase activity, elongating"/>
    <property type="evidence" value="ECO:0007669"/>
    <property type="project" value="RHEA"/>
</dbReference>
<dbReference type="GO" id="GO:0015631">
    <property type="term" value="F:tubulin binding"/>
    <property type="evidence" value="ECO:0000318"/>
    <property type="project" value="GO_Central"/>
</dbReference>
<dbReference type="GO" id="GO:0070740">
    <property type="term" value="F:tubulin-glutamic acid ligase activity"/>
    <property type="evidence" value="ECO:0000250"/>
    <property type="project" value="UniProtKB"/>
</dbReference>
<dbReference type="GO" id="GO:0001578">
    <property type="term" value="P:microtubule bundle formation"/>
    <property type="evidence" value="ECO:0000318"/>
    <property type="project" value="GO_Central"/>
</dbReference>
<dbReference type="GO" id="GO:0036211">
    <property type="term" value="P:protein modification process"/>
    <property type="evidence" value="ECO:0007669"/>
    <property type="project" value="InterPro"/>
</dbReference>
<dbReference type="FunFam" id="3.30.470.20:FF:000009">
    <property type="entry name" value="tubulin polyglutamylase TTLL5 isoform X1"/>
    <property type="match status" value="1"/>
</dbReference>
<dbReference type="Gene3D" id="3.30.470.20">
    <property type="entry name" value="ATP-grasp fold, B domain"/>
    <property type="match status" value="1"/>
</dbReference>
<dbReference type="InterPro" id="IPR004344">
    <property type="entry name" value="TTL/TTLL_fam"/>
</dbReference>
<dbReference type="PANTHER" id="PTHR12241">
    <property type="entry name" value="TUBULIN POLYGLUTAMYLASE"/>
    <property type="match status" value="1"/>
</dbReference>
<dbReference type="PANTHER" id="PTHR12241:SF91">
    <property type="entry name" value="TUBULIN POLYGLUTAMYLASE TTLL13"/>
    <property type="match status" value="1"/>
</dbReference>
<dbReference type="Pfam" id="PF03133">
    <property type="entry name" value="TTL"/>
    <property type="match status" value="1"/>
</dbReference>
<dbReference type="SUPFAM" id="SSF56059">
    <property type="entry name" value="Glutathione synthetase ATP-binding domain-like"/>
    <property type="match status" value="1"/>
</dbReference>
<dbReference type="PROSITE" id="PS51221">
    <property type="entry name" value="TTL"/>
    <property type="match status" value="1"/>
</dbReference>
<name>TTL13_HUMAN</name>
<proteinExistence type="evidence at protein level"/>
<feature type="chain" id="PRO_0000326167" description="Tubulin polyglutamylase TTLL13">
    <location>
        <begin position="1"/>
        <end position="815"/>
    </location>
</feature>
<feature type="domain" description="TTL" evidence="5">
    <location>
        <begin position="85"/>
        <end position="430"/>
    </location>
</feature>
<feature type="region of interest" description="c-MTBD region" evidence="7">
    <location>
        <begin position="401"/>
        <end position="482"/>
    </location>
</feature>
<feature type="region of interest" description="Disordered" evidence="6">
    <location>
        <begin position="520"/>
        <end position="556"/>
    </location>
</feature>
<feature type="coiled-coil region" evidence="4">
    <location>
        <begin position="504"/>
        <end position="528"/>
    </location>
</feature>
<feature type="compositionally biased region" description="Basic and acidic residues" evidence="6">
    <location>
        <begin position="536"/>
        <end position="550"/>
    </location>
</feature>
<feature type="binding site" evidence="1">
    <location>
        <position position="202"/>
    </location>
    <ligand>
        <name>ATP</name>
        <dbReference type="ChEBI" id="CHEBI:30616"/>
    </ligand>
</feature>
<feature type="binding site" evidence="1">
    <location>
        <begin position="208"/>
        <end position="209"/>
    </location>
    <ligand>
        <name>ATP</name>
        <dbReference type="ChEBI" id="CHEBI:30616"/>
    </ligand>
</feature>
<feature type="binding site" evidence="1">
    <location>
        <position position="208"/>
    </location>
    <ligand>
        <name>a protein</name>
        <dbReference type="ChEBI" id="CHEBI:16541"/>
    </ligand>
    <ligandPart>
        <name>L-glutamate residue</name>
        <dbReference type="ChEBI" id="CHEBI:29973"/>
        <note>L-glutamate acceptor residue in protein target</note>
    </ligandPart>
</feature>
<feature type="binding site" evidence="1">
    <location>
        <begin position="230"/>
        <end position="233"/>
    </location>
    <ligand>
        <name>ATP</name>
        <dbReference type="ChEBI" id="CHEBI:30616"/>
    </ligand>
</feature>
<feature type="binding site" evidence="1">
    <location>
        <begin position="243"/>
        <end position="245"/>
    </location>
    <ligand>
        <name>ATP</name>
        <dbReference type="ChEBI" id="CHEBI:30616"/>
    </ligand>
</feature>
<feature type="binding site" evidence="1">
    <location>
        <position position="269"/>
    </location>
    <ligand>
        <name>L-glutamate</name>
        <dbReference type="ChEBI" id="CHEBI:29985"/>
    </ligand>
</feature>
<feature type="binding site" evidence="1">
    <location>
        <begin position="291"/>
        <end position="292"/>
    </location>
    <ligand>
        <name>ATP</name>
        <dbReference type="ChEBI" id="CHEBI:30616"/>
    </ligand>
</feature>
<feature type="binding site" evidence="1">
    <location>
        <position position="293"/>
    </location>
    <ligand>
        <name>L-glutamate</name>
        <dbReference type="ChEBI" id="CHEBI:29985"/>
    </ligand>
</feature>
<feature type="binding site" evidence="1">
    <location>
        <position position="311"/>
    </location>
    <ligand>
        <name>L-glutamate</name>
        <dbReference type="ChEBI" id="CHEBI:29985"/>
    </ligand>
</feature>
<feature type="binding site" evidence="1">
    <location>
        <position position="376"/>
    </location>
    <ligand>
        <name>Mg(2+)</name>
        <dbReference type="ChEBI" id="CHEBI:18420"/>
        <label>1</label>
    </ligand>
</feature>
<feature type="binding site" evidence="1">
    <location>
        <position position="389"/>
    </location>
    <ligand>
        <name>Mg(2+)</name>
        <dbReference type="ChEBI" id="CHEBI:18420"/>
        <label>1</label>
    </ligand>
</feature>
<feature type="binding site" evidence="1">
    <location>
        <position position="389"/>
    </location>
    <ligand>
        <name>Mg(2+)</name>
        <dbReference type="ChEBI" id="CHEBI:18420"/>
        <label>2</label>
    </ligand>
</feature>
<feature type="binding site" evidence="1">
    <location>
        <position position="391"/>
    </location>
    <ligand>
        <name>Mg(2+)</name>
        <dbReference type="ChEBI" id="CHEBI:18420"/>
        <label>2</label>
    </ligand>
</feature>
<feature type="binding site" evidence="1">
    <location>
        <position position="407"/>
    </location>
    <ligand>
        <name>L-glutamate</name>
        <dbReference type="ChEBI" id="CHEBI:29985"/>
    </ligand>
</feature>
<feature type="site" description="Essential for specifying alpha-elongation versus initiation step of the polyglutamylase activity" evidence="1">
    <location>
        <position position="208"/>
    </location>
</feature>
<feature type="splice variant" id="VSP_052720" description="In isoform 2." evidence="8 9">
    <original>KEKTESSH</original>
    <variation>CARCLACV</variation>
    <location>
        <begin position="452"/>
        <end position="459"/>
    </location>
</feature>
<feature type="splice variant" id="VSP_052721" description="In isoform 2." evidence="8 9">
    <location>
        <begin position="460"/>
        <end position="815"/>
    </location>
</feature>
<feature type="sequence variant" id="VAR_057318" description="In dbSNP:rs12912620.">
    <original>A</original>
    <variation>T</variation>
    <location>
        <position position="126"/>
    </location>
</feature>
<feature type="sequence variant" id="VAR_057319" description="In dbSNP:rs2063743.">
    <original>T</original>
    <variation>I</variation>
    <location>
        <position position="262"/>
    </location>
</feature>
<feature type="mutagenesis site" description="Decreased binding to microtubules and polyglutamylase activity; when associated with 451-E-E-452." evidence="7">
    <original>KRK</original>
    <variation>EEE</variation>
    <location>
        <begin position="425"/>
        <end position="427"/>
    </location>
</feature>
<feature type="mutagenesis site" description="Decreased binding to microtubules and polyglutamylase activity; when associated with 425-E--E-427." evidence="7">
    <original>RK</original>
    <variation>EE</variation>
    <location>
        <begin position="451"/>
        <end position="452"/>
    </location>
</feature>
<feature type="sequence conflict" description="In Ref. 1; AK127965." evidence="10" ref="1">
    <original>G</original>
    <variation>S</variation>
    <location>
        <position position="108"/>
    </location>
</feature>
<comment type="function">
    <text evidence="2">Polyglutamylase which modifies tubulin, generating polyglutamate side chains of variable lengths on the gamma-carboxyl group of specific glutamate residues within the C-terminal tail of tubulin. Mediates ATP-dependent polyglutamate side-chain elongation of the polyglutamylation reaction but not the initiation step. Preferentially modifies the alpha-tubulin tail over a beta-tail.</text>
</comment>
<comment type="catalytic activity">
    <reaction evidence="2">
        <text>(L-glutamyl)(n)-gamma-L-glutamyl-L-glutamyl-[protein] + L-glutamate + ATP = (L-glutamyl)(n+1)-gamma-L-glutamyl-L-glutamyl-[protein] + ADP + phosphate + H(+)</text>
        <dbReference type="Rhea" id="RHEA:60148"/>
        <dbReference type="Rhea" id="RHEA-COMP:15519"/>
        <dbReference type="Rhea" id="RHEA-COMP:15675"/>
        <dbReference type="ChEBI" id="CHEBI:15378"/>
        <dbReference type="ChEBI" id="CHEBI:29985"/>
        <dbReference type="ChEBI" id="CHEBI:30616"/>
        <dbReference type="ChEBI" id="CHEBI:43474"/>
        <dbReference type="ChEBI" id="CHEBI:143623"/>
        <dbReference type="ChEBI" id="CHEBI:456216"/>
    </reaction>
    <physiologicalReaction direction="left-to-right" evidence="2">
        <dbReference type="Rhea" id="RHEA:60149"/>
    </physiologicalReaction>
</comment>
<comment type="cofactor">
    <cofactor evidence="1">
        <name>Mg(2+)</name>
        <dbReference type="ChEBI" id="CHEBI:18420"/>
    </cofactor>
</comment>
<comment type="alternative products">
    <event type="alternative splicing"/>
    <isoform>
        <id>A6NNM8-1</id>
        <name evidence="10">1</name>
        <sequence type="displayed"/>
    </isoform>
    <isoform>
        <id>A6NNM8-2</id>
        <name evidence="10">2</name>
        <sequence type="described" ref="VSP_052720 VSP_052721"/>
    </isoform>
</comment>
<comment type="domain">
    <text evidence="3 7">The flexible c-MTBD (cationic microtubule binding domain) region mediates binding to microtubules. It is positively charged and becomes ordered when bound to microtubules: it interacts with a negatively charged patch on tubulin. The presence of positive charges in the c-MTBD region is essential for proper binding.</text>
</comment>
<comment type="domain">
    <text evidence="1">Gln-208 is the main determinant for regioselectivity, which segregates between initiases and elongases in all tubulin--tyrosine ligase family. A glutamine residue at this position is found in elongases TTLL6, TTLL9, TTLL11, TTLL13, TTLL10 and favors glutamate-chain elongation, whereas an arginine residue is found in initiases TTLL2, TTLL4, TTLL5, TTLL3, TTLL8 and favors initiation.</text>
</comment>
<comment type="miscellaneous">
    <molecule>Isoform 2</molecule>
    <text evidence="10">May be due to an intron retention.</text>
</comment>
<comment type="similarity">
    <text evidence="4">Belongs to the tubulin--tyrosine ligase family.</text>
</comment>
<comment type="sequence caution" evidence="10">
    <conflict type="frameshift">
        <sequence resource="EMBL" id="BC036668"/>
    </conflict>
</comment>